<feature type="chain" id="PRO_1000188900" description="Urease subunit alpha">
    <location>
        <begin position="1"/>
        <end position="572"/>
    </location>
</feature>
<feature type="domain" description="Urease" evidence="1">
    <location>
        <begin position="134"/>
        <end position="572"/>
    </location>
</feature>
<feature type="active site" description="Proton donor" evidence="1">
    <location>
        <position position="325"/>
    </location>
</feature>
<feature type="binding site" evidence="1">
    <location>
        <position position="139"/>
    </location>
    <ligand>
        <name>Ni(2+)</name>
        <dbReference type="ChEBI" id="CHEBI:49786"/>
        <label>1</label>
    </ligand>
</feature>
<feature type="binding site" evidence="1">
    <location>
        <position position="141"/>
    </location>
    <ligand>
        <name>Ni(2+)</name>
        <dbReference type="ChEBI" id="CHEBI:49786"/>
        <label>1</label>
    </ligand>
</feature>
<feature type="binding site" description="via carbamate group" evidence="1">
    <location>
        <position position="222"/>
    </location>
    <ligand>
        <name>Ni(2+)</name>
        <dbReference type="ChEBI" id="CHEBI:49786"/>
        <label>1</label>
    </ligand>
</feature>
<feature type="binding site" description="via carbamate group" evidence="1">
    <location>
        <position position="222"/>
    </location>
    <ligand>
        <name>Ni(2+)</name>
        <dbReference type="ChEBI" id="CHEBI:49786"/>
        <label>2</label>
    </ligand>
</feature>
<feature type="binding site" evidence="1">
    <location>
        <position position="224"/>
    </location>
    <ligand>
        <name>substrate</name>
    </ligand>
</feature>
<feature type="binding site" evidence="1">
    <location>
        <position position="251"/>
    </location>
    <ligand>
        <name>Ni(2+)</name>
        <dbReference type="ChEBI" id="CHEBI:49786"/>
        <label>2</label>
    </ligand>
</feature>
<feature type="binding site" evidence="1">
    <location>
        <position position="277"/>
    </location>
    <ligand>
        <name>Ni(2+)</name>
        <dbReference type="ChEBI" id="CHEBI:49786"/>
        <label>2</label>
    </ligand>
</feature>
<feature type="binding site" evidence="1">
    <location>
        <position position="365"/>
    </location>
    <ligand>
        <name>Ni(2+)</name>
        <dbReference type="ChEBI" id="CHEBI:49786"/>
        <label>1</label>
    </ligand>
</feature>
<feature type="modified residue" description="N6-carboxylysine" evidence="1">
    <location>
        <position position="222"/>
    </location>
</feature>
<protein>
    <recommendedName>
        <fullName evidence="1">Urease subunit alpha</fullName>
        <ecNumber evidence="1">3.5.1.5</ecNumber>
    </recommendedName>
    <alternativeName>
        <fullName evidence="1">Urea amidohydrolase subunit alpha</fullName>
    </alternativeName>
</protein>
<comment type="catalytic activity">
    <reaction evidence="1">
        <text>urea + 2 H2O + H(+) = hydrogencarbonate + 2 NH4(+)</text>
        <dbReference type="Rhea" id="RHEA:20557"/>
        <dbReference type="ChEBI" id="CHEBI:15377"/>
        <dbReference type="ChEBI" id="CHEBI:15378"/>
        <dbReference type="ChEBI" id="CHEBI:16199"/>
        <dbReference type="ChEBI" id="CHEBI:17544"/>
        <dbReference type="ChEBI" id="CHEBI:28938"/>
        <dbReference type="EC" id="3.5.1.5"/>
    </reaction>
</comment>
<comment type="cofactor">
    <cofactor evidence="1">
        <name>Ni cation</name>
        <dbReference type="ChEBI" id="CHEBI:25516"/>
    </cofactor>
    <text evidence="1">Binds 2 nickel ions per subunit.</text>
</comment>
<comment type="pathway">
    <text evidence="1">Nitrogen metabolism; urea degradation; CO(2) and NH(3) from urea (urease route): step 1/1.</text>
</comment>
<comment type="subunit">
    <text evidence="1">Heterotrimer of UreA (gamma), UreB (beta) and UreC (alpha) subunits. Three heterotrimers associate to form the active enzyme.</text>
</comment>
<comment type="subcellular location">
    <subcellularLocation>
        <location evidence="1">Cytoplasm</location>
    </subcellularLocation>
</comment>
<comment type="PTM">
    <text evidence="1">Carboxylation allows a single lysine to coordinate two nickel ions.</text>
</comment>
<comment type="similarity">
    <text evidence="1">Belongs to the metallo-dependent hydrolases superfamily. Urease alpha subunit family.</text>
</comment>
<organism>
    <name type="scientific">Yersinia pseudotuberculosis serotype O:3 (strain YPIII)</name>
    <dbReference type="NCBI Taxonomy" id="502800"/>
    <lineage>
        <taxon>Bacteria</taxon>
        <taxon>Pseudomonadati</taxon>
        <taxon>Pseudomonadota</taxon>
        <taxon>Gammaproteobacteria</taxon>
        <taxon>Enterobacterales</taxon>
        <taxon>Yersiniaceae</taxon>
        <taxon>Yersinia</taxon>
    </lineage>
</organism>
<sequence>MPQISRQEYAGLFGPTTGDKIRLGDTNLFIEIEKDLRGYGEESVYGGGKSLRDGMGANNNLTRDNGVLDLVITNVTIVDARLGVIKADVGIRDGKIAGIGKSGNPGVMDGVTQGMVVGVSTDAISGEHLILTAAGIDSHIHLISPQQAYHALSNGVATFFGGGIGPTDGTNGTTVTPGPWNIRQMLRSIEGLPVNVGILGKGNSYGRGPLLEQAIAGVVGYKVHEDWGATANALRHALRMADEVDIQVSVHTDSLNECGYVEDTIDAFEGRTIHTFHTEGAGGGHAPDIIRVASQTNVLPSSTNPTLPYGVNSQAELFDMIMVCHNLNPNVPADVSFAESRVRPETIAAENVLHDMGVISMFSSDSQAMGRVGENWLRILQTADAMKAARGKLPEDAAGNDNFRVLRYVAKITINPAITQGVSHVIGSVEVGKMADLVLWDPRFFGAKPKMVIKGGMINWAAMGDPNASLPTPQPVFYRPMFGAMGKTLQDTCVTFVSQAALDDGVKEKAGLDRQVIAVKNCRTISKRDLVRNDQTPNIEVDPETFAVKVDGVHATCEPIATASMNQRYFFG</sequence>
<reference key="1">
    <citation type="submission" date="2008-02" db="EMBL/GenBank/DDBJ databases">
        <title>Complete sequence of Yersinia pseudotuberculosis YPIII.</title>
        <authorList>
            <consortium name="US DOE Joint Genome Institute"/>
            <person name="Copeland A."/>
            <person name="Lucas S."/>
            <person name="Lapidus A."/>
            <person name="Glavina del Rio T."/>
            <person name="Dalin E."/>
            <person name="Tice H."/>
            <person name="Bruce D."/>
            <person name="Goodwin L."/>
            <person name="Pitluck S."/>
            <person name="Munk A.C."/>
            <person name="Brettin T."/>
            <person name="Detter J.C."/>
            <person name="Han C."/>
            <person name="Tapia R."/>
            <person name="Schmutz J."/>
            <person name="Larimer F."/>
            <person name="Land M."/>
            <person name="Hauser L."/>
            <person name="Challacombe J.F."/>
            <person name="Green L."/>
            <person name="Lindler L.E."/>
            <person name="Nikolich M.P."/>
            <person name="Richardson P."/>
        </authorList>
    </citation>
    <scope>NUCLEOTIDE SEQUENCE [LARGE SCALE GENOMIC DNA]</scope>
    <source>
        <strain>YPIII</strain>
    </source>
</reference>
<keyword id="KW-0963">Cytoplasm</keyword>
<keyword id="KW-0378">Hydrolase</keyword>
<keyword id="KW-0479">Metal-binding</keyword>
<keyword id="KW-0533">Nickel</keyword>
<proteinExistence type="inferred from homology"/>
<name>URE1_YERPY</name>
<dbReference type="EC" id="3.5.1.5" evidence="1"/>
<dbReference type="EMBL" id="CP000950">
    <property type="protein sequence ID" value="ACA67431.1"/>
    <property type="molecule type" value="Genomic_DNA"/>
</dbReference>
<dbReference type="RefSeq" id="WP_002212229.1">
    <property type="nucleotide sequence ID" value="NZ_CP009792.1"/>
</dbReference>
<dbReference type="SMR" id="B1JR71"/>
<dbReference type="MEROPS" id="M38.982"/>
<dbReference type="KEGG" id="ypy:YPK_1133"/>
<dbReference type="PATRIC" id="fig|502800.11.peg.1767"/>
<dbReference type="UniPathway" id="UPA00258">
    <property type="reaction ID" value="UER00370"/>
</dbReference>
<dbReference type="GO" id="GO:0005737">
    <property type="term" value="C:cytoplasm"/>
    <property type="evidence" value="ECO:0007669"/>
    <property type="project" value="UniProtKB-SubCell"/>
</dbReference>
<dbReference type="GO" id="GO:0016151">
    <property type="term" value="F:nickel cation binding"/>
    <property type="evidence" value="ECO:0007669"/>
    <property type="project" value="UniProtKB-UniRule"/>
</dbReference>
<dbReference type="GO" id="GO:0009039">
    <property type="term" value="F:urease activity"/>
    <property type="evidence" value="ECO:0007669"/>
    <property type="project" value="UniProtKB-UniRule"/>
</dbReference>
<dbReference type="GO" id="GO:0043419">
    <property type="term" value="P:urea catabolic process"/>
    <property type="evidence" value="ECO:0007669"/>
    <property type="project" value="UniProtKB-UniRule"/>
</dbReference>
<dbReference type="CDD" id="cd00375">
    <property type="entry name" value="Urease_alpha"/>
    <property type="match status" value="1"/>
</dbReference>
<dbReference type="Gene3D" id="3.20.20.140">
    <property type="entry name" value="Metal-dependent hydrolases"/>
    <property type="match status" value="1"/>
</dbReference>
<dbReference type="Gene3D" id="2.30.40.10">
    <property type="entry name" value="Urease, subunit C, domain 1"/>
    <property type="match status" value="1"/>
</dbReference>
<dbReference type="HAMAP" id="MF_01953">
    <property type="entry name" value="Urease_alpha"/>
    <property type="match status" value="1"/>
</dbReference>
<dbReference type="InterPro" id="IPR006680">
    <property type="entry name" value="Amidohydro-rel"/>
</dbReference>
<dbReference type="InterPro" id="IPR011059">
    <property type="entry name" value="Metal-dep_hydrolase_composite"/>
</dbReference>
<dbReference type="InterPro" id="IPR032466">
    <property type="entry name" value="Metal_Hydrolase"/>
</dbReference>
<dbReference type="InterPro" id="IPR011612">
    <property type="entry name" value="Urease_alpha_N_dom"/>
</dbReference>
<dbReference type="InterPro" id="IPR050112">
    <property type="entry name" value="Urease_alpha_subunit"/>
</dbReference>
<dbReference type="InterPro" id="IPR017950">
    <property type="entry name" value="Urease_AS"/>
</dbReference>
<dbReference type="InterPro" id="IPR005848">
    <property type="entry name" value="Urease_asu"/>
</dbReference>
<dbReference type="InterPro" id="IPR017951">
    <property type="entry name" value="Urease_asu_c"/>
</dbReference>
<dbReference type="InterPro" id="IPR029754">
    <property type="entry name" value="Urease_Ni-bd"/>
</dbReference>
<dbReference type="NCBIfam" id="NF009686">
    <property type="entry name" value="PRK13207.1"/>
    <property type="match status" value="1"/>
</dbReference>
<dbReference type="NCBIfam" id="NF009834">
    <property type="entry name" value="PRK13309.1"/>
    <property type="match status" value="1"/>
</dbReference>
<dbReference type="NCBIfam" id="TIGR01792">
    <property type="entry name" value="urease_alph"/>
    <property type="match status" value="1"/>
</dbReference>
<dbReference type="PANTHER" id="PTHR43440">
    <property type="entry name" value="UREASE"/>
    <property type="match status" value="1"/>
</dbReference>
<dbReference type="PANTHER" id="PTHR43440:SF1">
    <property type="entry name" value="UREASE"/>
    <property type="match status" value="1"/>
</dbReference>
<dbReference type="Pfam" id="PF01979">
    <property type="entry name" value="Amidohydro_1"/>
    <property type="match status" value="1"/>
</dbReference>
<dbReference type="Pfam" id="PF00449">
    <property type="entry name" value="Urease_alpha"/>
    <property type="match status" value="1"/>
</dbReference>
<dbReference type="PRINTS" id="PR01752">
    <property type="entry name" value="UREASE"/>
</dbReference>
<dbReference type="SUPFAM" id="SSF51338">
    <property type="entry name" value="Composite domain of metallo-dependent hydrolases"/>
    <property type="match status" value="1"/>
</dbReference>
<dbReference type="SUPFAM" id="SSF51556">
    <property type="entry name" value="Metallo-dependent hydrolases"/>
    <property type="match status" value="1"/>
</dbReference>
<dbReference type="PROSITE" id="PS01120">
    <property type="entry name" value="UREASE_1"/>
    <property type="match status" value="1"/>
</dbReference>
<dbReference type="PROSITE" id="PS00145">
    <property type="entry name" value="UREASE_2"/>
    <property type="match status" value="1"/>
</dbReference>
<dbReference type="PROSITE" id="PS51368">
    <property type="entry name" value="UREASE_3"/>
    <property type="match status" value="1"/>
</dbReference>
<accession>B1JR71</accession>
<evidence type="ECO:0000255" key="1">
    <source>
        <dbReference type="HAMAP-Rule" id="MF_01953"/>
    </source>
</evidence>
<gene>
    <name evidence="1" type="primary">ureC</name>
    <name type="ordered locus">YPK_1133</name>
</gene>